<keyword id="KW-0025">Alternative splicing</keyword>
<keyword id="KW-0131">Cell cycle</keyword>
<keyword id="KW-0132">Cell division</keyword>
<keyword id="KW-0137">Centromere</keyword>
<keyword id="KW-0158">Chromosome</keyword>
<keyword id="KW-0238">DNA-binding</keyword>
<keyword id="KW-1017">Isopeptide bond</keyword>
<keyword id="KW-0498">Mitosis</keyword>
<keyword id="KW-0539">Nucleus</keyword>
<keyword id="KW-0597">Phosphoprotein</keyword>
<keyword id="KW-1185">Reference proteome</keyword>
<keyword id="KW-0832">Ubl conjugation</keyword>
<reference key="1">
    <citation type="journal article" date="2005" name="Science">
        <title>The transcriptional landscape of the mammalian genome.</title>
        <authorList>
            <person name="Carninci P."/>
            <person name="Kasukawa T."/>
            <person name="Katayama S."/>
            <person name="Gough J."/>
            <person name="Frith M.C."/>
            <person name="Maeda N."/>
            <person name="Oyama R."/>
            <person name="Ravasi T."/>
            <person name="Lenhard B."/>
            <person name="Wells C."/>
            <person name="Kodzius R."/>
            <person name="Shimokawa K."/>
            <person name="Bajic V.B."/>
            <person name="Brenner S.E."/>
            <person name="Batalov S."/>
            <person name="Forrest A.R."/>
            <person name="Zavolan M."/>
            <person name="Davis M.J."/>
            <person name="Wilming L.G."/>
            <person name="Aidinis V."/>
            <person name="Allen J.E."/>
            <person name="Ambesi-Impiombato A."/>
            <person name="Apweiler R."/>
            <person name="Aturaliya R.N."/>
            <person name="Bailey T.L."/>
            <person name="Bansal M."/>
            <person name="Baxter L."/>
            <person name="Beisel K.W."/>
            <person name="Bersano T."/>
            <person name="Bono H."/>
            <person name="Chalk A.M."/>
            <person name="Chiu K.P."/>
            <person name="Choudhary V."/>
            <person name="Christoffels A."/>
            <person name="Clutterbuck D.R."/>
            <person name="Crowe M.L."/>
            <person name="Dalla E."/>
            <person name="Dalrymple B.P."/>
            <person name="de Bono B."/>
            <person name="Della Gatta G."/>
            <person name="di Bernardo D."/>
            <person name="Down T."/>
            <person name="Engstrom P."/>
            <person name="Fagiolini M."/>
            <person name="Faulkner G."/>
            <person name="Fletcher C.F."/>
            <person name="Fukushima T."/>
            <person name="Furuno M."/>
            <person name="Futaki S."/>
            <person name="Gariboldi M."/>
            <person name="Georgii-Hemming P."/>
            <person name="Gingeras T.R."/>
            <person name="Gojobori T."/>
            <person name="Green R.E."/>
            <person name="Gustincich S."/>
            <person name="Harbers M."/>
            <person name="Hayashi Y."/>
            <person name="Hensch T.K."/>
            <person name="Hirokawa N."/>
            <person name="Hill D."/>
            <person name="Huminiecki L."/>
            <person name="Iacono M."/>
            <person name="Ikeo K."/>
            <person name="Iwama A."/>
            <person name="Ishikawa T."/>
            <person name="Jakt M."/>
            <person name="Kanapin A."/>
            <person name="Katoh M."/>
            <person name="Kawasawa Y."/>
            <person name="Kelso J."/>
            <person name="Kitamura H."/>
            <person name="Kitano H."/>
            <person name="Kollias G."/>
            <person name="Krishnan S.P."/>
            <person name="Kruger A."/>
            <person name="Kummerfeld S.K."/>
            <person name="Kurochkin I.V."/>
            <person name="Lareau L.F."/>
            <person name="Lazarevic D."/>
            <person name="Lipovich L."/>
            <person name="Liu J."/>
            <person name="Liuni S."/>
            <person name="McWilliam S."/>
            <person name="Madan Babu M."/>
            <person name="Madera M."/>
            <person name="Marchionni L."/>
            <person name="Matsuda H."/>
            <person name="Matsuzawa S."/>
            <person name="Miki H."/>
            <person name="Mignone F."/>
            <person name="Miyake S."/>
            <person name="Morris K."/>
            <person name="Mottagui-Tabar S."/>
            <person name="Mulder N."/>
            <person name="Nakano N."/>
            <person name="Nakauchi H."/>
            <person name="Ng P."/>
            <person name="Nilsson R."/>
            <person name="Nishiguchi S."/>
            <person name="Nishikawa S."/>
            <person name="Nori F."/>
            <person name="Ohara O."/>
            <person name="Okazaki Y."/>
            <person name="Orlando V."/>
            <person name="Pang K.C."/>
            <person name="Pavan W.J."/>
            <person name="Pavesi G."/>
            <person name="Pesole G."/>
            <person name="Petrovsky N."/>
            <person name="Piazza S."/>
            <person name="Reed J."/>
            <person name="Reid J.F."/>
            <person name="Ring B.Z."/>
            <person name="Ringwald M."/>
            <person name="Rost B."/>
            <person name="Ruan Y."/>
            <person name="Salzberg S.L."/>
            <person name="Sandelin A."/>
            <person name="Schneider C."/>
            <person name="Schoenbach C."/>
            <person name="Sekiguchi K."/>
            <person name="Semple C.A."/>
            <person name="Seno S."/>
            <person name="Sessa L."/>
            <person name="Sheng Y."/>
            <person name="Shibata Y."/>
            <person name="Shimada H."/>
            <person name="Shimada K."/>
            <person name="Silva D."/>
            <person name="Sinclair B."/>
            <person name="Sperling S."/>
            <person name="Stupka E."/>
            <person name="Sugiura K."/>
            <person name="Sultana R."/>
            <person name="Takenaka Y."/>
            <person name="Taki K."/>
            <person name="Tammoja K."/>
            <person name="Tan S.L."/>
            <person name="Tang S."/>
            <person name="Taylor M.S."/>
            <person name="Tegner J."/>
            <person name="Teichmann S.A."/>
            <person name="Ueda H.R."/>
            <person name="van Nimwegen E."/>
            <person name="Verardo R."/>
            <person name="Wei C.L."/>
            <person name="Yagi K."/>
            <person name="Yamanishi H."/>
            <person name="Zabarovsky E."/>
            <person name="Zhu S."/>
            <person name="Zimmer A."/>
            <person name="Hide W."/>
            <person name="Bult C."/>
            <person name="Grimmond S.M."/>
            <person name="Teasdale R.D."/>
            <person name="Liu E.T."/>
            <person name="Brusic V."/>
            <person name="Quackenbush J."/>
            <person name="Wahlestedt C."/>
            <person name="Mattick J.S."/>
            <person name="Hume D.A."/>
            <person name="Kai C."/>
            <person name="Sasaki D."/>
            <person name="Tomaru Y."/>
            <person name="Fukuda S."/>
            <person name="Kanamori-Katayama M."/>
            <person name="Suzuki M."/>
            <person name="Aoki J."/>
            <person name="Arakawa T."/>
            <person name="Iida J."/>
            <person name="Imamura K."/>
            <person name="Itoh M."/>
            <person name="Kato T."/>
            <person name="Kawaji H."/>
            <person name="Kawagashira N."/>
            <person name="Kawashima T."/>
            <person name="Kojima M."/>
            <person name="Kondo S."/>
            <person name="Konno H."/>
            <person name="Nakano K."/>
            <person name="Ninomiya N."/>
            <person name="Nishio T."/>
            <person name="Okada M."/>
            <person name="Plessy C."/>
            <person name="Shibata K."/>
            <person name="Shiraki T."/>
            <person name="Suzuki S."/>
            <person name="Tagami M."/>
            <person name="Waki K."/>
            <person name="Watahiki A."/>
            <person name="Okamura-Oho Y."/>
            <person name="Suzuki H."/>
            <person name="Kawai J."/>
            <person name="Hayashizaki Y."/>
        </authorList>
    </citation>
    <scope>NUCLEOTIDE SEQUENCE [LARGE SCALE MRNA] (ISOFORM 3)</scope>
    <source>
        <strain>C57BL/6J</strain>
        <tissue>Bone</tissue>
        <tissue>Eye</tissue>
    </source>
</reference>
<reference key="2">
    <citation type="journal article" date="2004" name="Genome Res.">
        <title>The status, quality, and expansion of the NIH full-length cDNA project: the Mammalian Gene Collection (MGC).</title>
        <authorList>
            <consortium name="The MGC Project Team"/>
        </authorList>
    </citation>
    <scope>NUCLEOTIDE SEQUENCE [LARGE SCALE MRNA] (ISOFORMS 1 AND 2)</scope>
    <source>
        <strain>FVB/N</strain>
        <tissue>Embryo</tissue>
        <tissue>Mammary tumor</tissue>
    </source>
</reference>
<reference key="3">
    <citation type="submission" date="2005-02" db="EMBL/GenBank/DDBJ databases">
        <title>Prediction of the coding sequences of mouse homologues of KIAA gene. The complete nucleotide sequences of mouse KIAA-homologous cDNAs identified by screening of terminal sequences of cDNA clones randomly sampled from size-fractionated libraries.</title>
        <authorList>
            <person name="Okazaki N."/>
            <person name="Kikuno R.F."/>
            <person name="Ohara R."/>
            <person name="Inamoto S."/>
            <person name="Nagase T."/>
            <person name="Ohara O."/>
            <person name="Koga H."/>
        </authorList>
    </citation>
    <scope>NUCLEOTIDE SEQUENCE [LARGE SCALE MRNA] OF 172-998 (ISOFORM 1)</scope>
</reference>
<reference key="4">
    <citation type="journal article" date="2010" name="Cell">
        <title>A tissue-specific atlas of mouse protein phosphorylation and expression.</title>
        <authorList>
            <person name="Huttlin E.L."/>
            <person name="Jedrychowski M.P."/>
            <person name="Elias J.E."/>
            <person name="Goswami T."/>
            <person name="Rad R."/>
            <person name="Beausoleil S.A."/>
            <person name="Villen J."/>
            <person name="Haas W."/>
            <person name="Sowa M.E."/>
            <person name="Gygi S.P."/>
        </authorList>
    </citation>
    <scope>PHOSPHORYLATION [LARGE SCALE ANALYSIS] AT THR-516 AND THR-578</scope>
    <scope>IDENTIFICATION BY MASS SPECTROMETRY [LARGE SCALE ANALYSIS]</scope>
    <source>
        <tissue>Brown adipose tissue</tissue>
        <tissue>Spleen</tissue>
        <tissue>Testis</tissue>
    </source>
</reference>
<reference key="5">
    <citation type="journal article" date="2011" name="Biosci. Biotechnol. Biochem.">
        <title>Identification of novel nuclear protein interactions with the N-terminal part of filamin A.</title>
        <authorList>
            <person name="Qiu H."/>
            <person name="Nomiyama R."/>
            <person name="Moriguchi K."/>
            <person name="Fukada T."/>
            <person name="Sugimoto K."/>
        </authorList>
    </citation>
    <scope>INTERACTION WITH FLNA</scope>
</reference>
<comment type="function">
    <text evidence="1">Required for recruitment of CENPA to centromeres and normal chromosome segregation during mitosis.</text>
</comment>
<comment type="subunit">
    <text evidence="1 3">Interacts with SP1. Interacts with MIS18A. Identified in a complex containing MIS18A, OIP5/MIS18B, MIS18BP1, RBBP7 and RBBP4. Interacts with KAT7/HBO1 (By similarity). Interacts (via N-terminus) with FLNA (via N-terminus) (PubMed:21228480).</text>
</comment>
<comment type="subcellular location">
    <subcellularLocation>
        <location evidence="1">Nucleus</location>
    </subcellularLocation>
    <subcellularLocation>
        <location evidence="1">Chromosome</location>
        <location evidence="1">Centromere</location>
    </subcellularLocation>
    <text evidence="1">Associated with centromeres in interphase cells, from late anaphase to the G1 phase. Not detected on centromeres during earlier phases of mitosis. Associated with chromatin.</text>
</comment>
<comment type="alternative products">
    <event type="alternative splicing"/>
    <isoform>
        <id>Q80WQ8-1</id>
        <name>1</name>
        <sequence type="displayed"/>
    </isoform>
    <isoform>
        <id>Q80WQ8-2</id>
        <name>2</name>
        <sequence type="described" ref="VSP_037732 VSP_037733"/>
    </isoform>
    <isoform>
        <id>Q80WQ8-3</id>
        <name>3</name>
        <sequence type="described" ref="VSP_037731"/>
    </isoform>
</comment>
<protein>
    <recommendedName>
        <fullName>Mis18-binding protein 1</fullName>
    </recommendedName>
    <alternativeName>
        <fullName>Kinetochore-associated protein KNL-2 homolog</fullName>
    </alternativeName>
</protein>
<name>M18BP_MOUSE</name>
<dbReference type="EMBL" id="AK036395">
    <property type="protein sequence ID" value="BAC29410.1"/>
    <property type="molecule type" value="mRNA"/>
</dbReference>
<dbReference type="EMBL" id="AK053496">
    <property type="protein sequence ID" value="BAC35403.1"/>
    <property type="molecule type" value="mRNA"/>
</dbReference>
<dbReference type="EMBL" id="AK162657">
    <property type="protein sequence ID" value="BAE37008.1"/>
    <property type="molecule type" value="mRNA"/>
</dbReference>
<dbReference type="EMBL" id="BC042728">
    <property type="protein sequence ID" value="AAH42728.1"/>
    <property type="molecule type" value="mRNA"/>
</dbReference>
<dbReference type="EMBL" id="BC052175">
    <property type="protein sequence ID" value="AAH52175.1"/>
    <property type="molecule type" value="mRNA"/>
</dbReference>
<dbReference type="EMBL" id="AK220223">
    <property type="protein sequence ID" value="BAD90148.1"/>
    <property type="molecule type" value="mRNA"/>
</dbReference>
<dbReference type="CCDS" id="CCDS25942.1">
    <molecule id="Q80WQ8-1"/>
</dbReference>
<dbReference type="RefSeq" id="NP_766166.2">
    <molecule id="Q80WQ8-1"/>
    <property type="nucleotide sequence ID" value="NM_172578.2"/>
</dbReference>
<dbReference type="SMR" id="Q80WQ8"/>
<dbReference type="BioGRID" id="229939">
    <property type="interactions" value="9"/>
</dbReference>
<dbReference type="ComplexPortal" id="CPX-3273">
    <property type="entry name" value="Mis18 complex"/>
</dbReference>
<dbReference type="FunCoup" id="Q80WQ8">
    <property type="interactions" value="801"/>
</dbReference>
<dbReference type="STRING" id="10090.ENSMUSP00000052109"/>
<dbReference type="GlyGen" id="Q80WQ8">
    <property type="glycosylation" value="2 sites, 1 N-linked glycan (1 site), 1 O-linked glycan (1 site)"/>
</dbReference>
<dbReference type="iPTMnet" id="Q80WQ8"/>
<dbReference type="PhosphoSitePlus" id="Q80WQ8"/>
<dbReference type="jPOST" id="Q80WQ8"/>
<dbReference type="PaxDb" id="10090-ENSMUSP00000052109"/>
<dbReference type="PeptideAtlas" id="Q80WQ8"/>
<dbReference type="ProteomicsDB" id="295741">
    <molecule id="Q80WQ8-1"/>
</dbReference>
<dbReference type="ProteomicsDB" id="295742">
    <molecule id="Q80WQ8-2"/>
</dbReference>
<dbReference type="ProteomicsDB" id="295743">
    <molecule id="Q80WQ8-3"/>
</dbReference>
<dbReference type="Antibodypedia" id="12">
    <property type="antibodies" value="55 antibodies from 13 providers"/>
</dbReference>
<dbReference type="DNASU" id="217653"/>
<dbReference type="Ensembl" id="ENSMUST00000052201.9">
    <molecule id="Q80WQ8-1"/>
    <property type="protein sequence ID" value="ENSMUSP00000052109.9"/>
    <property type="gene ID" value="ENSMUSG00000047534.18"/>
</dbReference>
<dbReference type="Ensembl" id="ENSMUST00000222244.2">
    <molecule id="Q80WQ8-2"/>
    <property type="protein sequence ID" value="ENSMUSP00000152490.2"/>
    <property type="gene ID" value="ENSMUSG00000047534.18"/>
</dbReference>
<dbReference type="GeneID" id="217653"/>
<dbReference type="KEGG" id="mmu:217653"/>
<dbReference type="UCSC" id="uc007nrg.2">
    <molecule id="Q80WQ8-1"/>
    <property type="organism name" value="mouse"/>
</dbReference>
<dbReference type="UCSC" id="uc007nri.1">
    <molecule id="Q80WQ8-3"/>
    <property type="organism name" value="mouse"/>
</dbReference>
<dbReference type="UCSC" id="uc011ymg.1">
    <molecule id="Q80WQ8-2"/>
    <property type="organism name" value="mouse"/>
</dbReference>
<dbReference type="AGR" id="MGI:2145099"/>
<dbReference type="CTD" id="55320"/>
<dbReference type="MGI" id="MGI:2145099">
    <property type="gene designation" value="Mis18bp1"/>
</dbReference>
<dbReference type="VEuPathDB" id="HostDB:ENSMUSG00000047534"/>
<dbReference type="eggNOG" id="ENOG502QRUS">
    <property type="taxonomic scope" value="Eukaryota"/>
</dbReference>
<dbReference type="GeneTree" id="ENSGT00390000007395"/>
<dbReference type="HOGENOM" id="CLU_009019_1_0_1"/>
<dbReference type="InParanoid" id="Q80WQ8"/>
<dbReference type="OMA" id="HSNCQNK"/>
<dbReference type="OrthoDB" id="118550at2759"/>
<dbReference type="PhylomeDB" id="Q80WQ8"/>
<dbReference type="TreeFam" id="TF106401"/>
<dbReference type="Reactome" id="R-MMU-606279">
    <property type="pathway name" value="Deposition of new CENPA-containing nucleosomes at the centromere"/>
</dbReference>
<dbReference type="BioGRID-ORCS" id="217653">
    <property type="hits" value="22 hits in 82 CRISPR screens"/>
</dbReference>
<dbReference type="ChiTaRS" id="Mis18bp1">
    <property type="organism name" value="mouse"/>
</dbReference>
<dbReference type="PRO" id="PR:Q80WQ8"/>
<dbReference type="Proteomes" id="UP000000589">
    <property type="component" value="Chromosome 12"/>
</dbReference>
<dbReference type="RNAct" id="Q80WQ8">
    <property type="molecule type" value="protein"/>
</dbReference>
<dbReference type="Bgee" id="ENSMUSG00000047534">
    <property type="expression patterns" value="Expressed in metanephric ureteric bud and 177 other cell types or tissues"/>
</dbReference>
<dbReference type="ExpressionAtlas" id="Q80WQ8">
    <property type="expression patterns" value="baseline and differential"/>
</dbReference>
<dbReference type="GO" id="GO:0098654">
    <property type="term" value="C:CENP-A recruiting complex"/>
    <property type="evidence" value="ECO:0000314"/>
    <property type="project" value="MGI"/>
</dbReference>
<dbReference type="GO" id="GO:0000775">
    <property type="term" value="C:chromosome, centromeric region"/>
    <property type="evidence" value="ECO:0007669"/>
    <property type="project" value="UniProtKB-SubCell"/>
</dbReference>
<dbReference type="GO" id="GO:0003677">
    <property type="term" value="F:DNA binding"/>
    <property type="evidence" value="ECO:0007669"/>
    <property type="project" value="UniProtKB-KW"/>
</dbReference>
<dbReference type="GO" id="GO:0051301">
    <property type="term" value="P:cell division"/>
    <property type="evidence" value="ECO:0007669"/>
    <property type="project" value="UniProtKB-KW"/>
</dbReference>
<dbReference type="CDD" id="cd00167">
    <property type="entry name" value="SANT"/>
    <property type="match status" value="1"/>
</dbReference>
<dbReference type="FunFam" id="1.10.10.60:FF:000273">
    <property type="entry name" value="MIS18 binding protein 1"/>
    <property type="match status" value="1"/>
</dbReference>
<dbReference type="Gene3D" id="1.10.10.60">
    <property type="entry name" value="Homeodomain-like"/>
    <property type="match status" value="1"/>
</dbReference>
<dbReference type="InterPro" id="IPR009057">
    <property type="entry name" value="Homeodomain-like_sf"/>
</dbReference>
<dbReference type="InterPro" id="IPR039110">
    <property type="entry name" value="KNL2-like"/>
</dbReference>
<dbReference type="InterPro" id="IPR001005">
    <property type="entry name" value="SANT/Myb"/>
</dbReference>
<dbReference type="InterPro" id="IPR015216">
    <property type="entry name" value="SANTA"/>
</dbReference>
<dbReference type="PANTHER" id="PTHR16124">
    <property type="entry name" value="MIS18-BINDING PROTEIN 1"/>
    <property type="match status" value="1"/>
</dbReference>
<dbReference type="PANTHER" id="PTHR16124:SF3">
    <property type="entry name" value="MIS18-BINDING PROTEIN 1"/>
    <property type="match status" value="1"/>
</dbReference>
<dbReference type="Pfam" id="PF09133">
    <property type="entry name" value="SANTA"/>
    <property type="match status" value="1"/>
</dbReference>
<dbReference type="SMART" id="SM00717">
    <property type="entry name" value="SANT"/>
    <property type="match status" value="1"/>
</dbReference>
<dbReference type="SUPFAM" id="SSF46689">
    <property type="entry name" value="Homeodomain-like"/>
    <property type="match status" value="1"/>
</dbReference>
<organism>
    <name type="scientific">Mus musculus</name>
    <name type="common">Mouse</name>
    <dbReference type="NCBI Taxonomy" id="10090"/>
    <lineage>
        <taxon>Eukaryota</taxon>
        <taxon>Metazoa</taxon>
        <taxon>Chordata</taxon>
        <taxon>Craniata</taxon>
        <taxon>Vertebrata</taxon>
        <taxon>Euteleostomi</taxon>
        <taxon>Mammalia</taxon>
        <taxon>Eutheria</taxon>
        <taxon>Euarchontoglires</taxon>
        <taxon>Glires</taxon>
        <taxon>Rodentia</taxon>
        <taxon>Myomorpha</taxon>
        <taxon>Muroidea</taxon>
        <taxon>Muridae</taxon>
        <taxon>Murinae</taxon>
        <taxon>Mus</taxon>
        <taxon>Mus</taxon>
    </lineage>
</organism>
<feature type="chain" id="PRO_0000379895" description="Mis18-binding protein 1">
    <location>
        <begin position="1"/>
        <end position="998"/>
    </location>
</feature>
<feature type="domain" description="SANTA">
    <location>
        <begin position="336"/>
        <end position="422"/>
    </location>
</feature>
<feature type="domain" description="SANT">
    <location>
        <begin position="741"/>
        <end position="796"/>
    </location>
</feature>
<feature type="region of interest" description="Disordered" evidence="2">
    <location>
        <begin position="122"/>
        <end position="153"/>
    </location>
</feature>
<feature type="region of interest" description="Disordered" evidence="2">
    <location>
        <begin position="438"/>
        <end position="460"/>
    </location>
</feature>
<feature type="region of interest" description="Disordered" evidence="2">
    <location>
        <begin position="476"/>
        <end position="502"/>
    </location>
</feature>
<feature type="region of interest" description="Disordered" evidence="2">
    <location>
        <begin position="638"/>
        <end position="660"/>
    </location>
</feature>
<feature type="region of interest" description="Disordered" evidence="2">
    <location>
        <begin position="784"/>
        <end position="821"/>
    </location>
</feature>
<feature type="region of interest" description="Disordered" evidence="2">
    <location>
        <begin position="976"/>
        <end position="998"/>
    </location>
</feature>
<feature type="compositionally biased region" description="Basic and acidic residues" evidence="2">
    <location>
        <begin position="142"/>
        <end position="153"/>
    </location>
</feature>
<feature type="compositionally biased region" description="Polar residues" evidence="2">
    <location>
        <begin position="488"/>
        <end position="497"/>
    </location>
</feature>
<feature type="compositionally biased region" description="Basic and acidic residues" evidence="2">
    <location>
        <begin position="644"/>
        <end position="660"/>
    </location>
</feature>
<feature type="compositionally biased region" description="Basic residues" evidence="2">
    <location>
        <begin position="797"/>
        <end position="807"/>
    </location>
</feature>
<feature type="compositionally biased region" description="Basic and acidic residues" evidence="2">
    <location>
        <begin position="812"/>
        <end position="821"/>
    </location>
</feature>
<feature type="compositionally biased region" description="Acidic residues" evidence="2">
    <location>
        <begin position="981"/>
        <end position="990"/>
    </location>
</feature>
<feature type="modified residue" description="Phosphoserine" evidence="1">
    <location>
        <position position="9"/>
    </location>
</feature>
<feature type="modified residue" description="Phosphoserine" evidence="1">
    <location>
        <position position="109"/>
    </location>
</feature>
<feature type="modified residue" description="Phosphoserine" evidence="1">
    <location>
        <position position="134"/>
    </location>
</feature>
<feature type="modified residue" description="Phosphoserine" evidence="1">
    <location>
        <position position="169"/>
    </location>
</feature>
<feature type="modified residue" description="Phosphoserine" evidence="1">
    <location>
        <position position="258"/>
    </location>
</feature>
<feature type="modified residue" description="Phosphothreonine" evidence="7">
    <location>
        <position position="516"/>
    </location>
</feature>
<feature type="modified residue" description="Phosphothreonine" evidence="7">
    <location>
        <position position="578"/>
    </location>
</feature>
<feature type="modified residue" description="Phosphoserine" evidence="1">
    <location>
        <position position="638"/>
    </location>
</feature>
<feature type="modified residue" description="Phosphoserine" evidence="1">
    <location>
        <position position="639"/>
    </location>
</feature>
<feature type="modified residue" description="Phosphothreonine" evidence="1">
    <location>
        <position position="688"/>
    </location>
</feature>
<feature type="modified residue" description="Phosphoserine" evidence="1">
    <location>
        <position position="726"/>
    </location>
</feature>
<feature type="modified residue" description="Phosphoserine" evidence="1">
    <location>
        <position position="872"/>
    </location>
</feature>
<feature type="modified residue" description="Phosphoserine" evidence="1">
    <location>
        <position position="955"/>
    </location>
</feature>
<feature type="modified residue" description="Phosphoserine" evidence="1">
    <location>
        <position position="985"/>
    </location>
</feature>
<feature type="cross-link" description="Glycyl lysine isopeptide (Lys-Gly) (interchain with G-Cter in SUMO2)" evidence="1">
    <location>
        <position position="7"/>
    </location>
</feature>
<feature type="cross-link" description="Glycyl lysine isopeptide (Lys-Gly) (interchain with G-Cter in SUMO2)" evidence="1">
    <location>
        <position position="707"/>
    </location>
</feature>
<feature type="cross-link" description="Glycyl lysine isopeptide (Lys-Gly) (interchain with G-Cter in SUMO2)" evidence="1">
    <location>
        <position position="765"/>
    </location>
</feature>
<feature type="cross-link" description="Glycyl lysine isopeptide (Lys-Gly) (interchain with G-Cter in SUMO2)" evidence="1">
    <location>
        <position position="821"/>
    </location>
</feature>
<feature type="cross-link" description="Glycyl lysine isopeptide (Lys-Gly) (interchain with G-Cter in SUMO2)" evidence="1">
    <location>
        <position position="828"/>
    </location>
</feature>
<feature type="cross-link" description="Glycyl lysine isopeptide (Lys-Gly) (interchain with G-Cter in SUMO2)" evidence="1">
    <location>
        <position position="847"/>
    </location>
</feature>
<feature type="cross-link" description="Glycyl lysine isopeptide (Lys-Gly) (interchain with G-Cter in SUMO2)" evidence="1">
    <location>
        <position position="948"/>
    </location>
</feature>
<feature type="splice variant" id="VSP_037731" description="In isoform 3." evidence="5">
    <location>
        <begin position="433"/>
        <end position="998"/>
    </location>
</feature>
<feature type="splice variant" id="VSP_037732" description="In isoform 2." evidence="4">
    <original>AE</original>
    <variation>EN</variation>
    <location>
        <begin position="433"/>
        <end position="434"/>
    </location>
</feature>
<feature type="splice variant" id="VSP_037733" description="In isoform 2." evidence="4">
    <location>
        <begin position="435"/>
        <end position="998"/>
    </location>
</feature>
<feature type="sequence conflict" description="In Ref. 3; BAD90148." evidence="6" ref="3">
    <original>T</original>
    <variation>I</variation>
    <location>
        <position position="226"/>
    </location>
</feature>
<feature type="sequence conflict" description="In Ref. 1; BAC29410." evidence="6" ref="1">
    <original>T</original>
    <variation>A</variation>
    <location>
        <position position="321"/>
    </location>
</feature>
<gene>
    <name type="primary">Mis18bp1</name>
    <name type="synonym">Kiaa1903</name>
    <name type="synonym">Knl2</name>
    <name type="synonym">M18bp1</name>
</gene>
<accession>Q80WQ8</accession>
<accession>Q571G6</accession>
<accession>Q8BPR7</accession>
<accession>Q8CBB5</accession>
<accession>Q8CG92</accession>
<sequence length="998" mass="113956">MIVTPLKHSGIHLSSGTLQRRNMPLDAVFIDSIPSGTLTPLKDLVKYQKSSLKVNGHKKNQLLEIRTSNNKDLFQSTMLSEATLPNSSLDISVIKPSMDRLRNEMIYESPGKIFQRMKAKVQRDKQEQLTRSSSMLGSPQGEHTKDFPPNTDKKAQLQQTYICEEKQTSVQSNDPSLGDPPILNQEQKNVSASCISKKALTRAQFGGQVLHSKESPVRITVSKKNTFVLGGIDCTYEKFENTDVNTISSLCVPIKNHSQSITSDNDVTTERTAKEDITEPNEEMMSRRTILQDPIKNTSKIKRSSPRPNLTLSGRSQRKCTKLETVVKEVKKYQAVHLQEWMIKVINNNTAICVEGKLVDMTDVYWHSNVIIERIKHNELRTLSGNIYILKGLIDSVSMKEAGYPCYLTRKFMFGFPHNWKEHIDKFLEQLRAEKKNKTRQETARVQEKQKSKKKDAEDKETYVLQKASITYDLNDNSLERTEVPTDPLNSLEQPTSGKERRHPLLSQKRAYVLITPLRNKKLIEQRCIDYSLSIEGISDFFKAKHQEESDSDIHGTPSSTSKSQETFEHRVGFEGNTKEDCNECDIITARHIQIPCPKSKQMLTNDFMKKNKLPSKLQKTENQIGVSQYCRSSSHLSSEENEVEIKSRTRARNTKERLNRERENTNHITKDILLISETEGERACYITPKRPRSCYITPKRPRSSAKESHYKSAVSKDFLTEGKASDRTSRQLLDHLPGLTDDEEWSEQELQKLHCAFTSLPKHKPGFWSDVAMAVGSRTADECQKKYTEEPQGQGSRKHGSKKKQANKVQNGEKDSADAKTIKITAKVGTLKRKRQMRDCLEHLAKDNHDDFFTATPLQKQRIQLPSFQYSQDDDFLLDMDRDPASPSSIITSPLRSTTPQCQHFSPSMLAAIERNNCDRYVYQMQKNAKKYGKSNGGLVWGNIRKKTVKTDLSSPPPTRKALFNKDLGKNTDISKYFIDDTESDEEEKDYYFSNSD</sequence>
<evidence type="ECO:0000250" key="1">
    <source>
        <dbReference type="UniProtKB" id="Q6P0N0"/>
    </source>
</evidence>
<evidence type="ECO:0000256" key="2">
    <source>
        <dbReference type="SAM" id="MobiDB-lite"/>
    </source>
</evidence>
<evidence type="ECO:0000269" key="3">
    <source>
    </source>
</evidence>
<evidence type="ECO:0000303" key="4">
    <source>
    </source>
</evidence>
<evidence type="ECO:0000303" key="5">
    <source>
    </source>
</evidence>
<evidence type="ECO:0000305" key="6"/>
<evidence type="ECO:0007744" key="7">
    <source>
    </source>
</evidence>
<proteinExistence type="evidence at protein level"/>